<gene>
    <name evidence="1" type="primary">mntP</name>
    <name type="ordered locus">XfasM23_1382</name>
</gene>
<name>MNTP_XYLF2</name>
<feature type="chain" id="PRO_1000200048" description="Putative manganese efflux pump MntP">
    <location>
        <begin position="1"/>
        <end position="194"/>
    </location>
</feature>
<feature type="transmembrane region" description="Helical" evidence="1">
    <location>
        <begin position="3"/>
        <end position="23"/>
    </location>
</feature>
<feature type="transmembrane region" description="Helical" evidence="1">
    <location>
        <begin position="37"/>
        <end position="57"/>
    </location>
</feature>
<feature type="transmembrane region" description="Helical" evidence="1">
    <location>
        <begin position="65"/>
        <end position="85"/>
    </location>
</feature>
<feature type="transmembrane region" description="Helical" evidence="1">
    <location>
        <begin position="112"/>
        <end position="132"/>
    </location>
</feature>
<feature type="transmembrane region" description="Helical" evidence="1">
    <location>
        <begin position="137"/>
        <end position="157"/>
    </location>
</feature>
<feature type="transmembrane region" description="Helical" evidence="1">
    <location>
        <begin position="170"/>
        <end position="190"/>
    </location>
</feature>
<sequence>MSPITTLLIGIAMSTDAFAAAIGKGAAIGKPRLRDALYVAVIFGVIETATPIAGWLLGQVASHYIATFDHWIAFGLLGGLGIHMIVNGLKNNGNTCKDNADTHNRNSRWLTLAATALATSIDAAAIGISMAFLDIHIGIVAAVIGLCTFTMVIFGVMLGRVLGTFVGNRAEIVGGIILIIVGSTILYEHLSNTG</sequence>
<protein>
    <recommendedName>
        <fullName evidence="1">Putative manganese efflux pump MntP</fullName>
    </recommendedName>
</protein>
<keyword id="KW-0997">Cell inner membrane</keyword>
<keyword id="KW-1003">Cell membrane</keyword>
<keyword id="KW-0406">Ion transport</keyword>
<keyword id="KW-0464">Manganese</keyword>
<keyword id="KW-0472">Membrane</keyword>
<keyword id="KW-0812">Transmembrane</keyword>
<keyword id="KW-1133">Transmembrane helix</keyword>
<keyword id="KW-0813">Transport</keyword>
<evidence type="ECO:0000255" key="1">
    <source>
        <dbReference type="HAMAP-Rule" id="MF_01521"/>
    </source>
</evidence>
<comment type="function">
    <text evidence="1">Probably functions as a manganese efflux pump.</text>
</comment>
<comment type="subcellular location">
    <subcellularLocation>
        <location evidence="1">Cell inner membrane</location>
        <topology evidence="1">Multi-pass membrane protein</topology>
    </subcellularLocation>
</comment>
<comment type="similarity">
    <text evidence="1">Belongs to the MntP (TC 9.B.29) family.</text>
</comment>
<reference key="1">
    <citation type="journal article" date="2010" name="J. Bacteriol.">
        <title>Whole genome sequences of two Xylella fastidiosa strains (M12 and M23) causing almond leaf scorch disease in California.</title>
        <authorList>
            <person name="Chen J."/>
            <person name="Xie G."/>
            <person name="Han S."/>
            <person name="Chertkov O."/>
            <person name="Sims D."/>
            <person name="Civerolo E.L."/>
        </authorList>
    </citation>
    <scope>NUCLEOTIDE SEQUENCE [LARGE SCALE GENOMIC DNA]</scope>
    <source>
        <strain>M23</strain>
    </source>
</reference>
<organism>
    <name type="scientific">Xylella fastidiosa (strain M23)</name>
    <dbReference type="NCBI Taxonomy" id="405441"/>
    <lineage>
        <taxon>Bacteria</taxon>
        <taxon>Pseudomonadati</taxon>
        <taxon>Pseudomonadota</taxon>
        <taxon>Gammaproteobacteria</taxon>
        <taxon>Lysobacterales</taxon>
        <taxon>Lysobacteraceae</taxon>
        <taxon>Xylella</taxon>
    </lineage>
</organism>
<proteinExistence type="inferred from homology"/>
<dbReference type="EMBL" id="CP001011">
    <property type="protein sequence ID" value="ACB92800.1"/>
    <property type="molecule type" value="Genomic_DNA"/>
</dbReference>
<dbReference type="RefSeq" id="WP_004088284.1">
    <property type="nucleotide sequence ID" value="NC_010577.1"/>
</dbReference>
<dbReference type="KEGG" id="xfn:XfasM23_1382"/>
<dbReference type="HOGENOM" id="CLU_096410_0_0_6"/>
<dbReference type="Proteomes" id="UP000001698">
    <property type="component" value="Chromosome"/>
</dbReference>
<dbReference type="GO" id="GO:0005886">
    <property type="term" value="C:plasma membrane"/>
    <property type="evidence" value="ECO:0007669"/>
    <property type="project" value="UniProtKB-SubCell"/>
</dbReference>
<dbReference type="GO" id="GO:0005384">
    <property type="term" value="F:manganese ion transmembrane transporter activity"/>
    <property type="evidence" value="ECO:0007669"/>
    <property type="project" value="UniProtKB-UniRule"/>
</dbReference>
<dbReference type="HAMAP" id="MF_01521">
    <property type="entry name" value="MntP_pump"/>
    <property type="match status" value="1"/>
</dbReference>
<dbReference type="InterPro" id="IPR003810">
    <property type="entry name" value="Mntp/YtaF"/>
</dbReference>
<dbReference type="InterPro" id="IPR022929">
    <property type="entry name" value="Put_MntP"/>
</dbReference>
<dbReference type="PANTHER" id="PTHR35529">
    <property type="entry name" value="MANGANESE EFFLUX PUMP MNTP-RELATED"/>
    <property type="match status" value="1"/>
</dbReference>
<dbReference type="PANTHER" id="PTHR35529:SF1">
    <property type="entry name" value="MANGANESE EFFLUX PUMP MNTP-RELATED"/>
    <property type="match status" value="1"/>
</dbReference>
<dbReference type="Pfam" id="PF02659">
    <property type="entry name" value="Mntp"/>
    <property type="match status" value="1"/>
</dbReference>
<accession>B2I611</accession>